<accession>Q1R1E5</accession>
<protein>
    <recommendedName>
        <fullName evidence="1">1-deoxy-D-xylulose-5-phosphate synthase</fullName>
        <ecNumber evidence="1">2.2.1.7</ecNumber>
    </recommendedName>
    <alternativeName>
        <fullName evidence="1">1-deoxyxylulose-5-phosphate synthase</fullName>
        <shortName evidence="1">DXP synthase</shortName>
        <shortName evidence="1">DXPS</shortName>
    </alternativeName>
</protein>
<reference key="1">
    <citation type="journal article" date="2011" name="Stand. Genomic Sci.">
        <title>Complete genome sequence of the halophilic and highly halotolerant Chromohalobacter salexigens type strain (1H11(T)).</title>
        <authorList>
            <person name="Copeland A."/>
            <person name="O'Connor K."/>
            <person name="Lucas S."/>
            <person name="Lapidus A."/>
            <person name="Berry K.W."/>
            <person name="Detter J.C."/>
            <person name="Del Rio T.G."/>
            <person name="Hammon N."/>
            <person name="Dalin E."/>
            <person name="Tice H."/>
            <person name="Pitluck S."/>
            <person name="Bruce D."/>
            <person name="Goodwin L."/>
            <person name="Han C."/>
            <person name="Tapia R."/>
            <person name="Saunders E."/>
            <person name="Schmutz J."/>
            <person name="Brettin T."/>
            <person name="Larimer F."/>
            <person name="Land M."/>
            <person name="Hauser L."/>
            <person name="Vargas C."/>
            <person name="Nieto J.J."/>
            <person name="Kyrpides N.C."/>
            <person name="Ivanova N."/>
            <person name="Goker M."/>
            <person name="Klenk H.P."/>
            <person name="Csonka L.N."/>
            <person name="Woyke T."/>
        </authorList>
    </citation>
    <scope>NUCLEOTIDE SEQUENCE [LARGE SCALE GENOMIC DNA]</scope>
    <source>
        <strain>ATCC BAA-138 / DSM 3043 / CIP 106854 / NCIMB 13768 / 1H11</strain>
    </source>
</reference>
<comment type="function">
    <text evidence="1">Catalyzes the acyloin condensation reaction between C atoms 2 and 3 of pyruvate and glyceraldehyde 3-phosphate to yield 1-deoxy-D-xylulose-5-phosphate (DXP).</text>
</comment>
<comment type="catalytic activity">
    <reaction evidence="1">
        <text>D-glyceraldehyde 3-phosphate + pyruvate + H(+) = 1-deoxy-D-xylulose 5-phosphate + CO2</text>
        <dbReference type="Rhea" id="RHEA:12605"/>
        <dbReference type="ChEBI" id="CHEBI:15361"/>
        <dbReference type="ChEBI" id="CHEBI:15378"/>
        <dbReference type="ChEBI" id="CHEBI:16526"/>
        <dbReference type="ChEBI" id="CHEBI:57792"/>
        <dbReference type="ChEBI" id="CHEBI:59776"/>
        <dbReference type="EC" id="2.2.1.7"/>
    </reaction>
</comment>
<comment type="cofactor">
    <cofactor evidence="1">
        <name>Mg(2+)</name>
        <dbReference type="ChEBI" id="CHEBI:18420"/>
    </cofactor>
    <text evidence="1">Binds 1 Mg(2+) ion per subunit.</text>
</comment>
<comment type="cofactor">
    <cofactor evidence="1">
        <name>thiamine diphosphate</name>
        <dbReference type="ChEBI" id="CHEBI:58937"/>
    </cofactor>
    <text evidence="1">Binds 1 thiamine pyrophosphate per subunit.</text>
</comment>
<comment type="pathway">
    <text evidence="1">Metabolic intermediate biosynthesis; 1-deoxy-D-xylulose 5-phosphate biosynthesis; 1-deoxy-D-xylulose 5-phosphate from D-glyceraldehyde 3-phosphate and pyruvate: step 1/1.</text>
</comment>
<comment type="subunit">
    <text evidence="1">Homodimer.</text>
</comment>
<comment type="similarity">
    <text evidence="1">Belongs to the transketolase family. DXPS subfamily.</text>
</comment>
<feature type="chain" id="PRO_0000256399" description="1-deoxy-D-xylulose-5-phosphate synthase">
    <location>
        <begin position="1"/>
        <end position="653"/>
    </location>
</feature>
<feature type="region of interest" description="Disordered" evidence="2">
    <location>
        <begin position="309"/>
        <end position="343"/>
    </location>
</feature>
<feature type="compositionally biased region" description="Basic and acidic residues" evidence="2">
    <location>
        <begin position="309"/>
        <end position="324"/>
    </location>
</feature>
<feature type="binding site" evidence="1">
    <location>
        <position position="86"/>
    </location>
    <ligand>
        <name>thiamine diphosphate</name>
        <dbReference type="ChEBI" id="CHEBI:58937"/>
    </ligand>
</feature>
<feature type="binding site" evidence="1">
    <location>
        <begin position="127"/>
        <end position="129"/>
    </location>
    <ligand>
        <name>thiamine diphosphate</name>
        <dbReference type="ChEBI" id="CHEBI:58937"/>
    </ligand>
</feature>
<feature type="binding site" evidence="1">
    <location>
        <position position="158"/>
    </location>
    <ligand>
        <name>Mg(2+)</name>
        <dbReference type="ChEBI" id="CHEBI:18420"/>
    </ligand>
</feature>
<feature type="binding site" evidence="1">
    <location>
        <begin position="159"/>
        <end position="160"/>
    </location>
    <ligand>
        <name>thiamine diphosphate</name>
        <dbReference type="ChEBI" id="CHEBI:58937"/>
    </ligand>
</feature>
<feature type="binding site" evidence="1">
    <location>
        <position position="187"/>
    </location>
    <ligand>
        <name>Mg(2+)</name>
        <dbReference type="ChEBI" id="CHEBI:18420"/>
    </ligand>
</feature>
<feature type="binding site" evidence="1">
    <location>
        <position position="187"/>
    </location>
    <ligand>
        <name>thiamine diphosphate</name>
        <dbReference type="ChEBI" id="CHEBI:58937"/>
    </ligand>
</feature>
<feature type="binding site" evidence="1">
    <location>
        <position position="294"/>
    </location>
    <ligand>
        <name>thiamine diphosphate</name>
        <dbReference type="ChEBI" id="CHEBI:58937"/>
    </ligand>
</feature>
<feature type="binding site" evidence="1">
    <location>
        <position position="395"/>
    </location>
    <ligand>
        <name>thiamine diphosphate</name>
        <dbReference type="ChEBI" id="CHEBI:58937"/>
    </ligand>
</feature>
<sequence>MKLFDEIPAERPATPLLDTCEHPAALHDFNATQLRQLADELRAYLLYSVGCTGGHFGAGLGVVELTVALHHILDTPYDRLVWDVGHQAYPHKILTGRREQMSTIRQFGGLAAFPKRDESPYDTFGVGHSSTSISAALGMALAARTKGERRRVCAVIGDGALSAGMAFEALAHAGHVDANMLVILNDNEMSISENVGGMASYLARILVSKPYTVMRENSKRVLSHLPGALELARRTEEHVKGMVSPATLFEEMGFNYIGPIDGHDLPTLVQTLGNMANLEGPQFLHIKTCKGRGFRPAEADPIGYHAITKLEKTTSEPPPKKEPRSPNAATAEPEAQPKPQPKPRKYCNVFGEWICDMAAVDARLIGITPAMREGSDLIRFSREYPERYYDVAIAEQHAVTLAAGMACEAMKPVVAIYSTFLQRGYDQLIHDVAVQALDVTFAIDRAGVVGEDGPTHHGALDLSFLRCIPGMIVLAPADEAECRAMLSAAYHHPGPAAVRYPRGTGPGTQVASNLEALPIGEAETRRSGREGGVALLAFGSMNGPAGEVAERLDATHLNMRSVKPLDREAILAAARDHRLLVTLEESVVAGGAGSGVNELLAAEGVQVEVLNLGLPDDFVEHGKPAELLAACGLDAEGIETAVRRRLETSRADD</sequence>
<keyword id="KW-0414">Isoprene biosynthesis</keyword>
<keyword id="KW-0460">Magnesium</keyword>
<keyword id="KW-0479">Metal-binding</keyword>
<keyword id="KW-1185">Reference proteome</keyword>
<keyword id="KW-0784">Thiamine biosynthesis</keyword>
<keyword id="KW-0786">Thiamine pyrophosphate</keyword>
<keyword id="KW-0808">Transferase</keyword>
<proteinExistence type="inferred from homology"/>
<dbReference type="EC" id="2.2.1.7" evidence="1"/>
<dbReference type="EMBL" id="CP000285">
    <property type="protein sequence ID" value="ABE57463.1"/>
    <property type="molecule type" value="Genomic_DNA"/>
</dbReference>
<dbReference type="RefSeq" id="WP_011505409.1">
    <property type="nucleotide sequence ID" value="NC_007963.1"/>
</dbReference>
<dbReference type="SMR" id="Q1R1E5"/>
<dbReference type="STRING" id="290398.Csal_0099"/>
<dbReference type="GeneID" id="95332849"/>
<dbReference type="KEGG" id="csa:Csal_0099"/>
<dbReference type="eggNOG" id="COG1154">
    <property type="taxonomic scope" value="Bacteria"/>
</dbReference>
<dbReference type="HOGENOM" id="CLU_009227_1_4_6"/>
<dbReference type="OrthoDB" id="9803371at2"/>
<dbReference type="UniPathway" id="UPA00064">
    <property type="reaction ID" value="UER00091"/>
</dbReference>
<dbReference type="Proteomes" id="UP000000239">
    <property type="component" value="Chromosome"/>
</dbReference>
<dbReference type="GO" id="GO:0005829">
    <property type="term" value="C:cytosol"/>
    <property type="evidence" value="ECO:0007669"/>
    <property type="project" value="TreeGrafter"/>
</dbReference>
<dbReference type="GO" id="GO:0008661">
    <property type="term" value="F:1-deoxy-D-xylulose-5-phosphate synthase activity"/>
    <property type="evidence" value="ECO:0007669"/>
    <property type="project" value="UniProtKB-UniRule"/>
</dbReference>
<dbReference type="GO" id="GO:0000287">
    <property type="term" value="F:magnesium ion binding"/>
    <property type="evidence" value="ECO:0007669"/>
    <property type="project" value="UniProtKB-UniRule"/>
</dbReference>
<dbReference type="GO" id="GO:0030976">
    <property type="term" value="F:thiamine pyrophosphate binding"/>
    <property type="evidence" value="ECO:0007669"/>
    <property type="project" value="UniProtKB-UniRule"/>
</dbReference>
<dbReference type="GO" id="GO:0052865">
    <property type="term" value="P:1-deoxy-D-xylulose 5-phosphate biosynthetic process"/>
    <property type="evidence" value="ECO:0007669"/>
    <property type="project" value="UniProtKB-UniPathway"/>
</dbReference>
<dbReference type="GO" id="GO:0019288">
    <property type="term" value="P:isopentenyl diphosphate biosynthetic process, methylerythritol 4-phosphate pathway"/>
    <property type="evidence" value="ECO:0007669"/>
    <property type="project" value="TreeGrafter"/>
</dbReference>
<dbReference type="GO" id="GO:0016114">
    <property type="term" value="P:terpenoid biosynthetic process"/>
    <property type="evidence" value="ECO:0007669"/>
    <property type="project" value="UniProtKB-UniRule"/>
</dbReference>
<dbReference type="GO" id="GO:0009228">
    <property type="term" value="P:thiamine biosynthetic process"/>
    <property type="evidence" value="ECO:0007669"/>
    <property type="project" value="UniProtKB-UniRule"/>
</dbReference>
<dbReference type="CDD" id="cd02007">
    <property type="entry name" value="TPP_DXS"/>
    <property type="match status" value="1"/>
</dbReference>
<dbReference type="CDD" id="cd07033">
    <property type="entry name" value="TPP_PYR_DXS_TK_like"/>
    <property type="match status" value="1"/>
</dbReference>
<dbReference type="FunFam" id="3.40.50.920:FF:000002">
    <property type="entry name" value="1-deoxy-D-xylulose-5-phosphate synthase"/>
    <property type="match status" value="1"/>
</dbReference>
<dbReference type="FunFam" id="3.40.50.970:FF:000005">
    <property type="entry name" value="1-deoxy-D-xylulose-5-phosphate synthase"/>
    <property type="match status" value="1"/>
</dbReference>
<dbReference type="Gene3D" id="3.40.50.920">
    <property type="match status" value="1"/>
</dbReference>
<dbReference type="Gene3D" id="3.40.50.970">
    <property type="match status" value="2"/>
</dbReference>
<dbReference type="HAMAP" id="MF_00315">
    <property type="entry name" value="DXP_synth"/>
    <property type="match status" value="1"/>
</dbReference>
<dbReference type="InterPro" id="IPR005477">
    <property type="entry name" value="Dxylulose-5-P_synthase"/>
</dbReference>
<dbReference type="InterPro" id="IPR029061">
    <property type="entry name" value="THDP-binding"/>
</dbReference>
<dbReference type="InterPro" id="IPR009014">
    <property type="entry name" value="Transketo_C/PFOR_II"/>
</dbReference>
<dbReference type="InterPro" id="IPR005475">
    <property type="entry name" value="Transketolase-like_Pyr-bd"/>
</dbReference>
<dbReference type="InterPro" id="IPR020826">
    <property type="entry name" value="Transketolase_BS"/>
</dbReference>
<dbReference type="InterPro" id="IPR033248">
    <property type="entry name" value="Transketolase_C"/>
</dbReference>
<dbReference type="NCBIfam" id="TIGR00204">
    <property type="entry name" value="dxs"/>
    <property type="match status" value="1"/>
</dbReference>
<dbReference type="NCBIfam" id="NF003933">
    <property type="entry name" value="PRK05444.2-2"/>
    <property type="match status" value="1"/>
</dbReference>
<dbReference type="PANTHER" id="PTHR43322">
    <property type="entry name" value="1-D-DEOXYXYLULOSE 5-PHOSPHATE SYNTHASE-RELATED"/>
    <property type="match status" value="1"/>
</dbReference>
<dbReference type="PANTHER" id="PTHR43322:SF5">
    <property type="entry name" value="1-DEOXY-D-XYLULOSE-5-PHOSPHATE SYNTHASE, CHLOROPLASTIC"/>
    <property type="match status" value="1"/>
</dbReference>
<dbReference type="Pfam" id="PF13292">
    <property type="entry name" value="DXP_synthase_N"/>
    <property type="match status" value="1"/>
</dbReference>
<dbReference type="Pfam" id="PF02779">
    <property type="entry name" value="Transket_pyr"/>
    <property type="match status" value="1"/>
</dbReference>
<dbReference type="Pfam" id="PF02780">
    <property type="entry name" value="Transketolase_C"/>
    <property type="match status" value="1"/>
</dbReference>
<dbReference type="SMART" id="SM00861">
    <property type="entry name" value="Transket_pyr"/>
    <property type="match status" value="1"/>
</dbReference>
<dbReference type="SUPFAM" id="SSF52518">
    <property type="entry name" value="Thiamin diphosphate-binding fold (THDP-binding)"/>
    <property type="match status" value="2"/>
</dbReference>
<dbReference type="SUPFAM" id="SSF52922">
    <property type="entry name" value="TK C-terminal domain-like"/>
    <property type="match status" value="1"/>
</dbReference>
<dbReference type="PROSITE" id="PS00802">
    <property type="entry name" value="TRANSKETOLASE_2"/>
    <property type="match status" value="1"/>
</dbReference>
<organism>
    <name type="scientific">Chromohalobacter salexigens (strain ATCC BAA-138 / DSM 3043 / CIP 106854 / NCIMB 13768 / 1H11)</name>
    <dbReference type="NCBI Taxonomy" id="290398"/>
    <lineage>
        <taxon>Bacteria</taxon>
        <taxon>Pseudomonadati</taxon>
        <taxon>Pseudomonadota</taxon>
        <taxon>Gammaproteobacteria</taxon>
        <taxon>Oceanospirillales</taxon>
        <taxon>Halomonadaceae</taxon>
        <taxon>Chromohalobacter</taxon>
    </lineage>
</organism>
<gene>
    <name evidence="1" type="primary">dxs</name>
    <name type="ordered locus">Csal_0099</name>
</gene>
<evidence type="ECO:0000255" key="1">
    <source>
        <dbReference type="HAMAP-Rule" id="MF_00315"/>
    </source>
</evidence>
<evidence type="ECO:0000256" key="2">
    <source>
        <dbReference type="SAM" id="MobiDB-lite"/>
    </source>
</evidence>
<name>DXS_CHRSD</name>